<gene>
    <name type="primary">NDUFB5</name>
</gene>
<dbReference type="EMBL" id="DQ885697">
    <property type="protein sequence ID" value="ABH12206.1"/>
    <property type="molecule type" value="mRNA"/>
</dbReference>
<dbReference type="RefSeq" id="NP_001266523.1">
    <property type="nucleotide sequence ID" value="NM_001279594.1"/>
</dbReference>
<dbReference type="SMR" id="Q0MQD7"/>
<dbReference type="FunCoup" id="Q0MQD7">
    <property type="interactions" value="2144"/>
</dbReference>
<dbReference type="STRING" id="9593.ENSGGOP00000045593"/>
<dbReference type="Ensembl" id="ENSGGOT00000049540.1">
    <property type="protein sequence ID" value="ENSGGOP00000045593.1"/>
    <property type="gene ID" value="ENSGGOG00000005222.4"/>
</dbReference>
<dbReference type="GeneID" id="101148993"/>
<dbReference type="KEGG" id="ggo:101148993"/>
<dbReference type="CTD" id="4711"/>
<dbReference type="eggNOG" id="KOG4632">
    <property type="taxonomic scope" value="Eukaryota"/>
</dbReference>
<dbReference type="GeneTree" id="ENSGT00390000009980"/>
<dbReference type="InParanoid" id="Q0MQD7"/>
<dbReference type="OMA" id="HHHMTIK"/>
<dbReference type="OrthoDB" id="15260at9604"/>
<dbReference type="Proteomes" id="UP000001519">
    <property type="component" value="Chromosome 3"/>
</dbReference>
<dbReference type="Bgee" id="ENSGGOG00000005222">
    <property type="expression patterns" value="Expressed in heart and 6 other cell types or tissues"/>
</dbReference>
<dbReference type="GO" id="GO:0005743">
    <property type="term" value="C:mitochondrial inner membrane"/>
    <property type="evidence" value="ECO:0007669"/>
    <property type="project" value="UniProtKB-SubCell"/>
</dbReference>
<dbReference type="GO" id="GO:0005654">
    <property type="term" value="C:nucleoplasm"/>
    <property type="evidence" value="ECO:0007669"/>
    <property type="project" value="Ensembl"/>
</dbReference>
<dbReference type="GO" id="GO:0045271">
    <property type="term" value="C:respiratory chain complex I"/>
    <property type="evidence" value="ECO:0000250"/>
    <property type="project" value="UniProtKB"/>
</dbReference>
<dbReference type="InterPro" id="IPR019173">
    <property type="entry name" value="NADH_UbQ_OxRdtase_B5_su"/>
</dbReference>
<dbReference type="PANTHER" id="PTHR13178:SF0">
    <property type="entry name" value="NADH DEHYDROGENASE [UBIQUINONE] 1 BETA SUBCOMPLEX SUBUNIT 5, MITOCHONDRIAL"/>
    <property type="match status" value="1"/>
</dbReference>
<dbReference type="PANTHER" id="PTHR13178">
    <property type="entry name" value="NADH-UBIQUINONE OXIDOREDUCTASE SGDH SUBUNIT"/>
    <property type="match status" value="1"/>
</dbReference>
<dbReference type="Pfam" id="PF09781">
    <property type="entry name" value="NDUF_B5"/>
    <property type="match status" value="1"/>
</dbReference>
<name>NDUB5_GORGO</name>
<feature type="transit peptide" description="Mitochondrion" evidence="1">
    <location>
        <begin position="1"/>
        <end position="46"/>
    </location>
</feature>
<feature type="chain" id="PRO_0000251833" description="NADH dehydrogenase [ubiquinone] 1 beta subcomplex subunit 5, mitochondrial">
    <location>
        <begin position="47"/>
        <end position="189"/>
    </location>
</feature>
<feature type="transmembrane region" description="Helical" evidence="3">
    <location>
        <begin position="73"/>
        <end position="93"/>
    </location>
</feature>
<protein>
    <recommendedName>
        <fullName>NADH dehydrogenase [ubiquinone] 1 beta subcomplex subunit 5, mitochondrial</fullName>
    </recommendedName>
    <alternativeName>
        <fullName>Complex I-SGDH</fullName>
        <shortName>CI-SGDH</shortName>
    </alternativeName>
    <alternativeName>
        <fullName>NADH-ubiquinone oxidoreductase SGDH subunit</fullName>
    </alternativeName>
</protein>
<keyword id="KW-0249">Electron transport</keyword>
<keyword id="KW-0472">Membrane</keyword>
<keyword id="KW-0496">Mitochondrion</keyword>
<keyword id="KW-0999">Mitochondrion inner membrane</keyword>
<keyword id="KW-1185">Reference proteome</keyword>
<keyword id="KW-0679">Respiratory chain</keyword>
<keyword id="KW-0809">Transit peptide</keyword>
<keyword id="KW-0812">Transmembrane</keyword>
<keyword id="KW-1133">Transmembrane helix</keyword>
<keyword id="KW-0813">Transport</keyword>
<comment type="function">
    <text evidence="2">Accessory subunit of the mitochondrial membrane respiratory chain NADH dehydrogenase (Complex I), that is believed not to be involved in catalysis. Complex I functions in the transfer of electrons from NADH to the respiratory chain. The immediate electron acceptor for the enzyme is believed to be ubiquinone.</text>
</comment>
<comment type="subunit">
    <text evidence="2">Complex I is composed of 45 different subunits.</text>
</comment>
<comment type="subcellular location">
    <subcellularLocation>
        <location evidence="2">Mitochondrion inner membrane</location>
        <topology evidence="2">Single-pass membrane protein</topology>
        <orientation evidence="2">Matrix side</orientation>
    </subcellularLocation>
</comment>
<comment type="similarity">
    <text evidence="4">Belongs to the complex I NDUFB5 subunit family.</text>
</comment>
<organism>
    <name type="scientific">Gorilla gorilla gorilla</name>
    <name type="common">Western lowland gorilla</name>
    <dbReference type="NCBI Taxonomy" id="9595"/>
    <lineage>
        <taxon>Eukaryota</taxon>
        <taxon>Metazoa</taxon>
        <taxon>Chordata</taxon>
        <taxon>Craniata</taxon>
        <taxon>Vertebrata</taxon>
        <taxon>Euteleostomi</taxon>
        <taxon>Mammalia</taxon>
        <taxon>Eutheria</taxon>
        <taxon>Euarchontoglires</taxon>
        <taxon>Primates</taxon>
        <taxon>Haplorrhini</taxon>
        <taxon>Catarrhini</taxon>
        <taxon>Hominidae</taxon>
        <taxon>Gorilla</taxon>
    </lineage>
</organism>
<reference key="1">
    <citation type="journal article" date="2006" name="Gene">
        <title>Adaptive selection of mitochondrial complex I subunits during primate radiation.</title>
        <authorList>
            <person name="Mishmar D."/>
            <person name="Ruiz-Pesini E."/>
            <person name="Mondragon-Palomino M."/>
            <person name="Procaccio V."/>
            <person name="Gaut B."/>
            <person name="Wallace D.C."/>
        </authorList>
    </citation>
    <scope>NUCLEOTIDE SEQUENCE [MRNA]</scope>
</reference>
<sequence length="189" mass="21750">MAAMSLLRRVSVTAVAALSGRPLGTRLGFGGFLTRGFPKAAAPVRHSGDHGKRLFVIRPSRFYDRRFLKLLRFYIALTGIPVAIFITLVNVFIGQAELAEIPEGYVPEHWEYYKHPISRWIARNFYDSPEKIYERTMAVLQIEAEKAELRVKELEVRKLMHVRGDGPWYYYETIDKELIDHSPKATPDN</sequence>
<accession>Q0MQD7</accession>
<evidence type="ECO:0000250" key="1"/>
<evidence type="ECO:0000250" key="2">
    <source>
        <dbReference type="UniProtKB" id="O43674"/>
    </source>
</evidence>
<evidence type="ECO:0000255" key="3"/>
<evidence type="ECO:0000305" key="4"/>
<proteinExistence type="evidence at transcript level"/>